<keyword id="KW-0472">Membrane</keyword>
<keyword id="KW-0812">Transmembrane</keyword>
<keyword id="KW-1133">Transmembrane helix</keyword>
<feature type="chain" id="PRO_0000299699" description="Putative uncharacterized protein YOL166C">
    <location>
        <begin position="1"/>
        <end position="112"/>
    </location>
</feature>
<feature type="transmembrane region" description="Helical" evidence="1">
    <location>
        <begin position="33"/>
        <end position="53"/>
    </location>
</feature>
<feature type="transmembrane region" description="Helical" evidence="1">
    <location>
        <begin position="69"/>
        <end position="89"/>
    </location>
</feature>
<comment type="subcellular location">
    <subcellularLocation>
        <location evidence="2">Membrane</location>
        <topology evidence="2">Multi-pass membrane protein</topology>
    </subcellularLocation>
</comment>
<comment type="caution">
    <text evidence="3">Product of a dubious gene prediction unlikely to encode a functional protein. Because of that it is not part of the S.cerevisiae S288c complete/reference proteome set.</text>
</comment>
<organism>
    <name type="scientific">Saccharomyces cerevisiae (strain ATCC 204508 / S288c)</name>
    <name type="common">Baker's yeast</name>
    <dbReference type="NCBI Taxonomy" id="559292"/>
    <lineage>
        <taxon>Eukaryota</taxon>
        <taxon>Fungi</taxon>
        <taxon>Dikarya</taxon>
        <taxon>Ascomycota</taxon>
        <taxon>Saccharomycotina</taxon>
        <taxon>Saccharomycetes</taxon>
        <taxon>Saccharomycetales</taxon>
        <taxon>Saccharomycetaceae</taxon>
        <taxon>Saccharomyces</taxon>
    </lineage>
</organism>
<gene>
    <name type="ordered locus">YOL166C</name>
    <name type="ORF">O0201</name>
</gene>
<dbReference type="EMBL" id="Z74908">
    <property type="protein sequence ID" value="CAA99188.1"/>
    <property type="molecule type" value="Genomic_DNA"/>
</dbReference>
<dbReference type="PIR" id="S66865">
    <property type="entry name" value="S66865"/>
</dbReference>
<dbReference type="STRING" id="4932.YOL166C"/>
<dbReference type="CarbonylDB" id="Q08373"/>
<dbReference type="PaxDb" id="4932-YOL166C"/>
<dbReference type="EnsemblFungi" id="YOL166C_mRNA">
    <property type="protein sequence ID" value="YOL166C"/>
    <property type="gene ID" value="YOL166C"/>
</dbReference>
<dbReference type="AGR" id="SGD:S000005526"/>
<dbReference type="SGD" id="S000005526">
    <property type="gene designation" value="YOL166C"/>
</dbReference>
<dbReference type="HOGENOM" id="CLU_2147835_0_0_1"/>
<dbReference type="GO" id="GO:0016020">
    <property type="term" value="C:membrane"/>
    <property type="evidence" value="ECO:0007669"/>
    <property type="project" value="UniProtKB-SubCell"/>
</dbReference>
<protein>
    <recommendedName>
        <fullName>Putative uncharacterized protein YOL166C</fullName>
    </recommendedName>
</protein>
<accession>Q08373</accession>
<sequence>MHVLYSTSAHILPSGRHINVARTPWLRLDIVSIIGILLHSGPIAGFSINMIIFRDAFIPLTKVIENKKMNNIISYSYIYIYIYICHITVENPGDITDKHYTRMNVSHYYIIT</sequence>
<evidence type="ECO:0000255" key="1"/>
<evidence type="ECO:0000305" key="2"/>
<evidence type="ECO:0000305" key="3">
    <source>
    </source>
</evidence>
<name>YOL66_YEAST</name>
<reference key="1">
    <citation type="journal article" date="1997" name="Nature">
        <title>The nucleotide sequence of Saccharomyces cerevisiae chromosome XV.</title>
        <authorList>
            <person name="Dujon B."/>
            <person name="Albermann K."/>
            <person name="Aldea M."/>
            <person name="Alexandraki D."/>
            <person name="Ansorge W."/>
            <person name="Arino J."/>
            <person name="Benes V."/>
            <person name="Bohn C."/>
            <person name="Bolotin-Fukuhara M."/>
            <person name="Bordonne R."/>
            <person name="Boyer J."/>
            <person name="Camasses A."/>
            <person name="Casamayor A."/>
            <person name="Casas C."/>
            <person name="Cheret G."/>
            <person name="Cziepluch C."/>
            <person name="Daignan-Fornier B."/>
            <person name="Dang V.-D."/>
            <person name="de Haan M."/>
            <person name="Delius H."/>
            <person name="Durand P."/>
            <person name="Fairhead C."/>
            <person name="Feldmann H."/>
            <person name="Gaillon L."/>
            <person name="Galisson F."/>
            <person name="Gamo F.-J."/>
            <person name="Gancedo C."/>
            <person name="Goffeau A."/>
            <person name="Goulding S.E."/>
            <person name="Grivell L.A."/>
            <person name="Habbig B."/>
            <person name="Hand N.J."/>
            <person name="Hani J."/>
            <person name="Hattenhorst U."/>
            <person name="Hebling U."/>
            <person name="Hernando Y."/>
            <person name="Herrero E."/>
            <person name="Heumann K."/>
            <person name="Hiesel R."/>
            <person name="Hilger F."/>
            <person name="Hofmann B."/>
            <person name="Hollenberg C.P."/>
            <person name="Hughes B."/>
            <person name="Jauniaux J.-C."/>
            <person name="Kalogeropoulos A."/>
            <person name="Katsoulou C."/>
            <person name="Kordes E."/>
            <person name="Lafuente M.J."/>
            <person name="Landt O."/>
            <person name="Louis E.J."/>
            <person name="Maarse A.C."/>
            <person name="Madania A."/>
            <person name="Mannhaupt G."/>
            <person name="Marck C."/>
            <person name="Martin R.P."/>
            <person name="Mewes H.-W."/>
            <person name="Michaux G."/>
            <person name="Paces V."/>
            <person name="Parle-McDermott A.G."/>
            <person name="Pearson B.M."/>
            <person name="Perrin A."/>
            <person name="Pettersson B."/>
            <person name="Poch O."/>
            <person name="Pohl T.M."/>
            <person name="Poirey R."/>
            <person name="Portetelle D."/>
            <person name="Pujol A."/>
            <person name="Purnelle B."/>
            <person name="Ramezani Rad M."/>
            <person name="Rechmann S."/>
            <person name="Schwager C."/>
            <person name="Schweizer M."/>
            <person name="Sor F."/>
            <person name="Sterky F."/>
            <person name="Tarassov I.A."/>
            <person name="Teodoru C."/>
            <person name="Tettelin H."/>
            <person name="Thierry A."/>
            <person name="Tobiasch E."/>
            <person name="Tzermia M."/>
            <person name="Uhlen M."/>
            <person name="Unseld M."/>
            <person name="Valens M."/>
            <person name="Vandenbol M."/>
            <person name="Vetter I."/>
            <person name="Vlcek C."/>
            <person name="Voet M."/>
            <person name="Volckaert G."/>
            <person name="Voss H."/>
            <person name="Wambutt R."/>
            <person name="Wedler H."/>
            <person name="Wiemann S."/>
            <person name="Winsor B."/>
            <person name="Wolfe K.H."/>
            <person name="Zollner A."/>
            <person name="Zumstein E."/>
            <person name="Kleine K."/>
        </authorList>
    </citation>
    <scope>NUCLEOTIDE SEQUENCE [LARGE SCALE GENOMIC DNA]</scope>
    <source>
        <strain>ATCC 204508 / S288c</strain>
    </source>
</reference>
<reference key="2">
    <citation type="journal article" date="2014" name="G3 (Bethesda)">
        <title>The reference genome sequence of Saccharomyces cerevisiae: Then and now.</title>
        <authorList>
            <person name="Engel S.R."/>
            <person name="Dietrich F.S."/>
            <person name="Fisk D.G."/>
            <person name="Binkley G."/>
            <person name="Balakrishnan R."/>
            <person name="Costanzo M.C."/>
            <person name="Dwight S.S."/>
            <person name="Hitz B.C."/>
            <person name="Karra K."/>
            <person name="Nash R.S."/>
            <person name="Weng S."/>
            <person name="Wong E.D."/>
            <person name="Lloyd P."/>
            <person name="Skrzypek M.S."/>
            <person name="Miyasato S.R."/>
            <person name="Simison M."/>
            <person name="Cherry J.M."/>
        </authorList>
    </citation>
    <scope>GENOME REANNOTATION</scope>
    <source>
        <strain>ATCC 204508 / S288c</strain>
    </source>
</reference>
<proteinExistence type="uncertain"/>